<comment type="function">
    <text evidence="1">Catalyzes the isomerization of sedoheptulose 7-phosphate in D-glycero-D-manno-heptose 7-phosphate.</text>
</comment>
<comment type="catalytic activity">
    <reaction evidence="1">
        <text>2 D-sedoheptulose 7-phosphate = D-glycero-alpha-D-manno-heptose 7-phosphate + D-glycero-beta-D-manno-heptose 7-phosphate</text>
        <dbReference type="Rhea" id="RHEA:27489"/>
        <dbReference type="ChEBI" id="CHEBI:57483"/>
        <dbReference type="ChEBI" id="CHEBI:60203"/>
        <dbReference type="ChEBI" id="CHEBI:60204"/>
        <dbReference type="EC" id="5.3.1.28"/>
    </reaction>
</comment>
<comment type="cofactor">
    <cofactor evidence="1">
        <name>Zn(2+)</name>
        <dbReference type="ChEBI" id="CHEBI:29105"/>
    </cofactor>
    <text evidence="1">Binds 1 zinc ion per subunit.</text>
</comment>
<comment type="pathway">
    <text evidence="1">Carbohydrate biosynthesis; D-glycero-D-manno-heptose 7-phosphate biosynthesis; D-glycero-alpha-D-manno-heptose 7-phosphate and D-glycero-beta-D-manno-heptose 7-phosphate from sedoheptulose 7-phosphate: step 1/1.</text>
</comment>
<comment type="subunit">
    <text evidence="1">Homotetramer.</text>
</comment>
<comment type="subcellular location">
    <subcellularLocation>
        <location evidence="1">Cytoplasm</location>
    </subcellularLocation>
</comment>
<comment type="miscellaneous">
    <text evidence="1">The reaction produces a racemic mixture of D-glycero-alpha-D-manno-heptose 7-phosphate and D-glycero-beta-D-manno-heptose 7-phosphate.</text>
</comment>
<comment type="similarity">
    <text evidence="1">Belongs to the SIS family. GmhA subfamily.</text>
</comment>
<reference key="1">
    <citation type="journal article" date="2008" name="Appl. Environ. Microbiol.">
        <title>Genome of the epsilonproteobacterial chemolithoautotroph Sulfurimonas denitrificans.</title>
        <authorList>
            <person name="Sievert S.M."/>
            <person name="Scott K.M."/>
            <person name="Klotz M.G."/>
            <person name="Chain P.S.G."/>
            <person name="Hauser L.J."/>
            <person name="Hemp J."/>
            <person name="Huegler M."/>
            <person name="Land M."/>
            <person name="Lapidus A."/>
            <person name="Larimer F.W."/>
            <person name="Lucas S."/>
            <person name="Malfatti S.A."/>
            <person name="Meyer F."/>
            <person name="Paulsen I.T."/>
            <person name="Ren Q."/>
            <person name="Simon J."/>
            <person name="Bailey K."/>
            <person name="Diaz E."/>
            <person name="Fitzpatrick K.A."/>
            <person name="Glover B."/>
            <person name="Gwatney N."/>
            <person name="Korajkic A."/>
            <person name="Long A."/>
            <person name="Mobberley J.M."/>
            <person name="Pantry S.N."/>
            <person name="Pazder G."/>
            <person name="Peterson S."/>
            <person name="Quintanilla J.D."/>
            <person name="Sprinkle R."/>
            <person name="Stephens J."/>
            <person name="Thomas P."/>
            <person name="Vaughn R."/>
            <person name="Weber M.J."/>
            <person name="Wooten L.L."/>
        </authorList>
    </citation>
    <scope>NUCLEOTIDE SEQUENCE [LARGE SCALE GENOMIC DNA]</scope>
    <source>
        <strain>ATCC 33889 / DSM 1251</strain>
    </source>
</reference>
<accession>Q30T29</accession>
<name>GMHA_SULDN</name>
<organism>
    <name type="scientific">Sulfurimonas denitrificans (strain ATCC 33889 / DSM 1251)</name>
    <name type="common">Thiomicrospira denitrificans (strain ATCC 33889 / DSM 1251)</name>
    <dbReference type="NCBI Taxonomy" id="326298"/>
    <lineage>
        <taxon>Bacteria</taxon>
        <taxon>Pseudomonadati</taxon>
        <taxon>Campylobacterota</taxon>
        <taxon>Epsilonproteobacteria</taxon>
        <taxon>Campylobacterales</taxon>
        <taxon>Sulfurimonadaceae</taxon>
        <taxon>Sulfurimonas</taxon>
    </lineage>
</organism>
<evidence type="ECO:0000255" key="1">
    <source>
        <dbReference type="HAMAP-Rule" id="MF_00067"/>
    </source>
</evidence>
<keyword id="KW-0119">Carbohydrate metabolism</keyword>
<keyword id="KW-0963">Cytoplasm</keyword>
<keyword id="KW-0413">Isomerase</keyword>
<keyword id="KW-0479">Metal-binding</keyword>
<keyword id="KW-1185">Reference proteome</keyword>
<keyword id="KW-0862">Zinc</keyword>
<proteinExistence type="inferred from homology"/>
<dbReference type="EC" id="5.3.1.28" evidence="1"/>
<dbReference type="EMBL" id="CP000153">
    <property type="protein sequence ID" value="ABB43852.1"/>
    <property type="molecule type" value="Genomic_DNA"/>
</dbReference>
<dbReference type="RefSeq" id="WP_011372206.1">
    <property type="nucleotide sequence ID" value="NC_007575.1"/>
</dbReference>
<dbReference type="SMR" id="Q30T29"/>
<dbReference type="STRING" id="326298.Suden_0573"/>
<dbReference type="KEGG" id="tdn:Suden_0573"/>
<dbReference type="eggNOG" id="COG0279">
    <property type="taxonomic scope" value="Bacteria"/>
</dbReference>
<dbReference type="HOGENOM" id="CLU_080999_4_0_7"/>
<dbReference type="OrthoDB" id="9810929at2"/>
<dbReference type="UniPathway" id="UPA00041">
    <property type="reaction ID" value="UER00436"/>
</dbReference>
<dbReference type="Proteomes" id="UP000002714">
    <property type="component" value="Chromosome"/>
</dbReference>
<dbReference type="GO" id="GO:0005737">
    <property type="term" value="C:cytoplasm"/>
    <property type="evidence" value="ECO:0007669"/>
    <property type="project" value="UniProtKB-SubCell"/>
</dbReference>
<dbReference type="GO" id="GO:0097367">
    <property type="term" value="F:carbohydrate derivative binding"/>
    <property type="evidence" value="ECO:0007669"/>
    <property type="project" value="InterPro"/>
</dbReference>
<dbReference type="GO" id="GO:0008968">
    <property type="term" value="F:D-sedoheptulose 7-phosphate isomerase activity"/>
    <property type="evidence" value="ECO:0007669"/>
    <property type="project" value="UniProtKB-UniRule"/>
</dbReference>
<dbReference type="GO" id="GO:0008270">
    <property type="term" value="F:zinc ion binding"/>
    <property type="evidence" value="ECO:0007669"/>
    <property type="project" value="UniProtKB-UniRule"/>
</dbReference>
<dbReference type="GO" id="GO:0005975">
    <property type="term" value="P:carbohydrate metabolic process"/>
    <property type="evidence" value="ECO:0007669"/>
    <property type="project" value="UniProtKB-UniRule"/>
</dbReference>
<dbReference type="GO" id="GO:2001061">
    <property type="term" value="P:D-glycero-D-manno-heptose 7-phosphate biosynthetic process"/>
    <property type="evidence" value="ECO:0007669"/>
    <property type="project" value="UniProtKB-UniPathway"/>
</dbReference>
<dbReference type="CDD" id="cd05006">
    <property type="entry name" value="SIS_GmhA"/>
    <property type="match status" value="1"/>
</dbReference>
<dbReference type="Gene3D" id="3.40.50.10490">
    <property type="entry name" value="Glucose-6-phosphate isomerase like protein, domain 1"/>
    <property type="match status" value="1"/>
</dbReference>
<dbReference type="HAMAP" id="MF_00067">
    <property type="entry name" value="GmhA"/>
    <property type="match status" value="1"/>
</dbReference>
<dbReference type="InterPro" id="IPR035461">
    <property type="entry name" value="GmhA/DiaA"/>
</dbReference>
<dbReference type="InterPro" id="IPR004515">
    <property type="entry name" value="Phosphoheptose_Isoase"/>
</dbReference>
<dbReference type="InterPro" id="IPR001347">
    <property type="entry name" value="SIS_dom"/>
</dbReference>
<dbReference type="InterPro" id="IPR046348">
    <property type="entry name" value="SIS_dom_sf"/>
</dbReference>
<dbReference type="InterPro" id="IPR050099">
    <property type="entry name" value="SIS_GmhA/DiaA_subfam"/>
</dbReference>
<dbReference type="PANTHER" id="PTHR30390:SF6">
    <property type="entry name" value="DNAA INITIATOR-ASSOCIATING PROTEIN DIAA"/>
    <property type="match status" value="1"/>
</dbReference>
<dbReference type="PANTHER" id="PTHR30390">
    <property type="entry name" value="SEDOHEPTULOSE 7-PHOSPHATE ISOMERASE / DNAA INITIATOR-ASSOCIATING FACTOR FOR REPLICATION INITIATION"/>
    <property type="match status" value="1"/>
</dbReference>
<dbReference type="Pfam" id="PF13580">
    <property type="entry name" value="SIS_2"/>
    <property type="match status" value="1"/>
</dbReference>
<dbReference type="SUPFAM" id="SSF53697">
    <property type="entry name" value="SIS domain"/>
    <property type="match status" value="1"/>
</dbReference>
<dbReference type="PROSITE" id="PS51464">
    <property type="entry name" value="SIS"/>
    <property type="match status" value="1"/>
</dbReference>
<feature type="chain" id="PRO_1000009101" description="Phosphoheptose isomerase">
    <location>
        <begin position="1"/>
        <end position="195"/>
    </location>
</feature>
<feature type="domain" description="SIS" evidence="1">
    <location>
        <begin position="35"/>
        <end position="195"/>
    </location>
</feature>
<feature type="binding site" evidence="1">
    <location>
        <begin position="51"/>
        <end position="53"/>
    </location>
    <ligand>
        <name>substrate</name>
    </ligand>
</feature>
<feature type="binding site" evidence="1">
    <location>
        <position position="60"/>
    </location>
    <ligand>
        <name>Zn(2+)</name>
        <dbReference type="ChEBI" id="CHEBI:29105"/>
    </ligand>
</feature>
<feature type="binding site" evidence="1">
    <location>
        <position position="64"/>
    </location>
    <ligand>
        <name>substrate</name>
    </ligand>
</feature>
<feature type="binding site" evidence="1">
    <location>
        <position position="64"/>
    </location>
    <ligand>
        <name>Zn(2+)</name>
        <dbReference type="ChEBI" id="CHEBI:29105"/>
    </ligand>
</feature>
<feature type="binding site" evidence="1">
    <location>
        <begin position="93"/>
        <end position="94"/>
    </location>
    <ligand>
        <name>substrate</name>
    </ligand>
</feature>
<feature type="binding site" evidence="1">
    <location>
        <begin position="119"/>
        <end position="121"/>
    </location>
    <ligand>
        <name>substrate</name>
    </ligand>
</feature>
<feature type="binding site" evidence="1">
    <location>
        <position position="124"/>
    </location>
    <ligand>
        <name>substrate</name>
    </ligand>
</feature>
<feature type="binding site" evidence="1">
    <location>
        <position position="171"/>
    </location>
    <ligand>
        <name>substrate</name>
    </ligand>
</feature>
<feature type="binding site" evidence="1">
    <location>
        <position position="171"/>
    </location>
    <ligand>
        <name>Zn(2+)</name>
        <dbReference type="ChEBI" id="CHEBI:29105"/>
    </ligand>
</feature>
<feature type="binding site" evidence="1">
    <location>
        <position position="179"/>
    </location>
    <ligand>
        <name>Zn(2+)</name>
        <dbReference type="ChEBI" id="CHEBI:29105"/>
    </ligand>
</feature>
<gene>
    <name evidence="1" type="primary">gmhA</name>
    <name type="ordered locus">Suden_0573</name>
</gene>
<protein>
    <recommendedName>
        <fullName evidence="1">Phosphoheptose isomerase</fullName>
        <ecNumber evidence="1">5.3.1.28</ecNumber>
    </recommendedName>
    <alternativeName>
        <fullName evidence="1">Sedoheptulose 7-phosphate isomerase</fullName>
    </alternativeName>
</protein>
<sequence length="195" mass="21029">MKKYIKEQIKKSFEIKQTIYENENLINKIEEVSKLCVALYRGDKKTILAGNGGSAADAQHIAAELVGRYGFDRPSIPSLALTTDTSCLTAIGNDYGYDNVFSRQLEGMGQAGDIFIGISTSGNSKNIINAFISAKKKGITTVALVGRDGGEMAKMADVALVVPSDSTPRIQESHILIGHIICDIIEKEIFGDGVN</sequence>